<keyword id="KW-1185">Reference proteome</keyword>
<organism>
    <name type="scientific">Haemophilus influenzae (strain ATCC 51907 / DSM 11121 / KW20 / Rd)</name>
    <dbReference type="NCBI Taxonomy" id="71421"/>
    <lineage>
        <taxon>Bacteria</taxon>
        <taxon>Pseudomonadati</taxon>
        <taxon>Pseudomonadota</taxon>
        <taxon>Gammaproteobacteria</taxon>
        <taxon>Pasteurellales</taxon>
        <taxon>Pasteurellaceae</taxon>
        <taxon>Haemophilus</taxon>
    </lineage>
</organism>
<reference key="1">
    <citation type="journal article" date="1995" name="Science">
        <title>Whole-genome random sequencing and assembly of Haemophilus influenzae Rd.</title>
        <authorList>
            <person name="Fleischmann R.D."/>
            <person name="Adams M.D."/>
            <person name="White O."/>
            <person name="Clayton R.A."/>
            <person name="Kirkness E.F."/>
            <person name="Kerlavage A.R."/>
            <person name="Bult C.J."/>
            <person name="Tomb J.-F."/>
            <person name="Dougherty B.A."/>
            <person name="Merrick J.M."/>
            <person name="McKenney K."/>
            <person name="Sutton G.G."/>
            <person name="FitzHugh W."/>
            <person name="Fields C.A."/>
            <person name="Gocayne J.D."/>
            <person name="Scott J.D."/>
            <person name="Shirley R."/>
            <person name="Liu L.-I."/>
            <person name="Glodek A."/>
            <person name="Kelley J.M."/>
            <person name="Weidman J.F."/>
            <person name="Phillips C.A."/>
            <person name="Spriggs T."/>
            <person name="Hedblom E."/>
            <person name="Cotton M.D."/>
            <person name="Utterback T.R."/>
            <person name="Hanna M.C."/>
            <person name="Nguyen D.T."/>
            <person name="Saudek D.M."/>
            <person name="Brandon R.C."/>
            <person name="Fine L.D."/>
            <person name="Fritchman J.L."/>
            <person name="Fuhrmann J.L."/>
            <person name="Geoghagen N.S.M."/>
            <person name="Gnehm C.L."/>
            <person name="McDonald L.A."/>
            <person name="Small K.V."/>
            <person name="Fraser C.M."/>
            <person name="Smith H.O."/>
            <person name="Venter J.C."/>
        </authorList>
    </citation>
    <scope>NUCLEOTIDE SEQUENCE [LARGE SCALE GENOMIC DNA]</scope>
    <source>
        <strain>ATCC 51907 / DSM 11121 / KW20 / Rd</strain>
    </source>
</reference>
<feature type="chain" id="PRO_0000078025" description="Uncharacterized protein HI_1326">
    <location>
        <begin position="1"/>
        <end position="242"/>
    </location>
</feature>
<accession>P44162</accession>
<gene>
    <name type="ordered locus">HI_1326</name>
</gene>
<protein>
    <recommendedName>
        <fullName>Uncharacterized protein HI_1326</fullName>
    </recommendedName>
</protein>
<name>Y1326_HAEIN</name>
<dbReference type="EMBL" id="L42023">
    <property type="protein sequence ID" value="AAC22980.1"/>
    <property type="molecule type" value="Genomic_DNA"/>
</dbReference>
<dbReference type="PIR" id="I64025">
    <property type="entry name" value="I64025"/>
</dbReference>
<dbReference type="RefSeq" id="NP_439477.1">
    <property type="nucleotide sequence ID" value="NC_000907.1"/>
</dbReference>
<dbReference type="SMR" id="P44162"/>
<dbReference type="STRING" id="71421.HI_1326"/>
<dbReference type="EnsemblBacteria" id="AAC22980">
    <property type="protein sequence ID" value="AAC22980"/>
    <property type="gene ID" value="HI_1326"/>
</dbReference>
<dbReference type="KEGG" id="hin:HI_1326"/>
<dbReference type="PATRIC" id="fig|71421.8.peg.1378"/>
<dbReference type="eggNOG" id="COG0515">
    <property type="taxonomic scope" value="Bacteria"/>
</dbReference>
<dbReference type="HOGENOM" id="CLU_094944_0_0_6"/>
<dbReference type="OrthoDB" id="5564772at2"/>
<dbReference type="BioCyc" id="HINF71421:G1GJ1-1351-MONOMER"/>
<dbReference type="Proteomes" id="UP000000579">
    <property type="component" value="Chromosome"/>
</dbReference>
<dbReference type="InterPro" id="IPR011009">
    <property type="entry name" value="Kinase-like_dom_sf"/>
</dbReference>
<dbReference type="SUPFAM" id="SSF56112">
    <property type="entry name" value="Protein kinase-like (PK-like)"/>
    <property type="match status" value="1"/>
</dbReference>
<sequence>MMVNDDFQEYVKQLVTKHRDERIYPFQYEGKKYWLKQPEKLKGIWLLLKPHPKKSFKNELYTLLKLAEQNAPVPKVSYYSDHFFVLENVGLTVSQWLCNKNIDEQQKFLIIYDACLALIDLHAKNLVHGRPAIRDITWDKGKVTFLDFESRSNSRNQNWVVIRDMLFFFDSLCREEDISDTFIQKVALYYQTHCEAKNWQNMIVFLQRFSWVYYLLLPFKPIAKTDLISIYRLFEIFLIKKK</sequence>
<proteinExistence type="predicted"/>